<keyword id="KW-1185">Reference proteome</keyword>
<keyword id="KW-0687">Ribonucleoprotein</keyword>
<keyword id="KW-0689">Ribosomal protein</keyword>
<sequence length="44" mass="5448">MFMTYQPKKKQRKKEHGFRKRMSTLSGRKVLKRRRLKGRKRLTA</sequence>
<reference key="1">
    <citation type="journal article" date="2001" name="J. Bacteriol.">
        <title>Genome sequence and comparative analysis of the solvent-producing bacterium Clostridium acetobutylicum.</title>
        <authorList>
            <person name="Noelling J."/>
            <person name="Breton G."/>
            <person name="Omelchenko M.V."/>
            <person name="Makarova K.S."/>
            <person name="Zeng Q."/>
            <person name="Gibson R."/>
            <person name="Lee H.M."/>
            <person name="Dubois J."/>
            <person name="Qiu D."/>
            <person name="Hitti J."/>
            <person name="Wolf Y.I."/>
            <person name="Tatusov R.L."/>
            <person name="Sabathe F."/>
            <person name="Doucette-Stamm L.A."/>
            <person name="Soucaille P."/>
            <person name="Daly M.J."/>
            <person name="Bennett G.N."/>
            <person name="Koonin E.V."/>
            <person name="Smith D.R."/>
        </authorList>
    </citation>
    <scope>NUCLEOTIDE SEQUENCE [LARGE SCALE GENOMIC DNA]</scope>
    <source>
        <strain>ATCC 824 / DSM 792 / JCM 1419 / IAM 19013 / LMG 5710 / NBRC 13948 / NRRL B-527 / VKM B-1787 / 2291 / W</strain>
    </source>
</reference>
<proteinExistence type="inferred from homology"/>
<comment type="similarity">
    <text evidence="2">Belongs to the bacterial ribosomal protein bL34 family.</text>
</comment>
<accession>Q97CV7</accession>
<organism>
    <name type="scientific">Clostridium acetobutylicum (strain ATCC 824 / DSM 792 / JCM 1419 / IAM 19013 / LMG 5710 / NBRC 13948 / NRRL B-527 / VKM B-1787 / 2291 / W)</name>
    <dbReference type="NCBI Taxonomy" id="272562"/>
    <lineage>
        <taxon>Bacteria</taxon>
        <taxon>Bacillati</taxon>
        <taxon>Bacillota</taxon>
        <taxon>Clostridia</taxon>
        <taxon>Eubacteriales</taxon>
        <taxon>Clostridiaceae</taxon>
        <taxon>Clostridium</taxon>
    </lineage>
</organism>
<name>RL34_CLOAB</name>
<feature type="chain" id="PRO_0000187369" description="Large ribosomal subunit protein bL34">
    <location>
        <begin position="1"/>
        <end position="44"/>
    </location>
</feature>
<feature type="region of interest" description="Disordered" evidence="1">
    <location>
        <begin position="1"/>
        <end position="44"/>
    </location>
</feature>
<feature type="compositionally biased region" description="Basic residues" evidence="1">
    <location>
        <begin position="7"/>
        <end position="22"/>
    </location>
</feature>
<feature type="compositionally biased region" description="Basic residues" evidence="1">
    <location>
        <begin position="29"/>
        <end position="44"/>
    </location>
</feature>
<gene>
    <name type="primary">rpmH</name>
    <name type="ordered locus">CA_C3739</name>
</gene>
<protein>
    <recommendedName>
        <fullName evidence="2">Large ribosomal subunit protein bL34</fullName>
    </recommendedName>
    <alternativeName>
        <fullName>50S ribosomal protein L34</fullName>
    </alternativeName>
</protein>
<evidence type="ECO:0000256" key="1">
    <source>
        <dbReference type="SAM" id="MobiDB-lite"/>
    </source>
</evidence>
<evidence type="ECO:0000305" key="2"/>
<dbReference type="EMBL" id="AE001437">
    <property type="protein sequence ID" value="AAK81659.1"/>
    <property type="molecule type" value="Genomic_DNA"/>
</dbReference>
<dbReference type="PIR" id="H97358">
    <property type="entry name" value="H97358"/>
</dbReference>
<dbReference type="RefSeq" id="NP_350319.1">
    <property type="nucleotide sequence ID" value="NC_003030.1"/>
</dbReference>
<dbReference type="RefSeq" id="WP_010966999.1">
    <property type="nucleotide sequence ID" value="NC_003030.1"/>
</dbReference>
<dbReference type="SMR" id="Q97CV7"/>
<dbReference type="STRING" id="272562.CA_C3739"/>
<dbReference type="GeneID" id="45000235"/>
<dbReference type="KEGG" id="cac:CA_C3739"/>
<dbReference type="PATRIC" id="fig|272562.8.peg.3929"/>
<dbReference type="eggNOG" id="COG0230">
    <property type="taxonomic scope" value="Bacteria"/>
</dbReference>
<dbReference type="HOGENOM" id="CLU_129938_2_0_9"/>
<dbReference type="Proteomes" id="UP000000814">
    <property type="component" value="Chromosome"/>
</dbReference>
<dbReference type="GO" id="GO:1990904">
    <property type="term" value="C:ribonucleoprotein complex"/>
    <property type="evidence" value="ECO:0007669"/>
    <property type="project" value="UniProtKB-KW"/>
</dbReference>
<dbReference type="GO" id="GO:0005840">
    <property type="term" value="C:ribosome"/>
    <property type="evidence" value="ECO:0007669"/>
    <property type="project" value="UniProtKB-KW"/>
</dbReference>
<dbReference type="GO" id="GO:0003735">
    <property type="term" value="F:structural constituent of ribosome"/>
    <property type="evidence" value="ECO:0007669"/>
    <property type="project" value="InterPro"/>
</dbReference>
<dbReference type="GO" id="GO:0006412">
    <property type="term" value="P:translation"/>
    <property type="evidence" value="ECO:0007669"/>
    <property type="project" value="UniProtKB-UniRule"/>
</dbReference>
<dbReference type="FunFam" id="1.10.287.3980:FF:000001">
    <property type="entry name" value="Mitochondrial ribosomal protein L34"/>
    <property type="match status" value="1"/>
</dbReference>
<dbReference type="Gene3D" id="1.10.287.3980">
    <property type="match status" value="1"/>
</dbReference>
<dbReference type="HAMAP" id="MF_00391">
    <property type="entry name" value="Ribosomal_bL34"/>
    <property type="match status" value="1"/>
</dbReference>
<dbReference type="InterPro" id="IPR000271">
    <property type="entry name" value="Ribosomal_bL34"/>
</dbReference>
<dbReference type="InterPro" id="IPR020939">
    <property type="entry name" value="Ribosomal_bL34_CS"/>
</dbReference>
<dbReference type="NCBIfam" id="TIGR01030">
    <property type="entry name" value="rpmH_bact"/>
    <property type="match status" value="1"/>
</dbReference>
<dbReference type="PANTHER" id="PTHR14503:SF4">
    <property type="entry name" value="LARGE RIBOSOMAL SUBUNIT PROTEIN BL34M"/>
    <property type="match status" value="1"/>
</dbReference>
<dbReference type="PANTHER" id="PTHR14503">
    <property type="entry name" value="MITOCHONDRIAL RIBOSOMAL PROTEIN 34 FAMILY MEMBER"/>
    <property type="match status" value="1"/>
</dbReference>
<dbReference type="Pfam" id="PF00468">
    <property type="entry name" value="Ribosomal_L34"/>
    <property type="match status" value="1"/>
</dbReference>
<dbReference type="PROSITE" id="PS00784">
    <property type="entry name" value="RIBOSOMAL_L34"/>
    <property type="match status" value="1"/>
</dbReference>